<feature type="chain" id="PRO_1000023219" description="Thymidylate kinase">
    <location>
        <begin position="1"/>
        <end position="208"/>
    </location>
</feature>
<feature type="binding site" evidence="1">
    <location>
        <begin position="10"/>
        <end position="17"/>
    </location>
    <ligand>
        <name>ATP</name>
        <dbReference type="ChEBI" id="CHEBI:30616"/>
    </ligand>
</feature>
<evidence type="ECO:0000255" key="1">
    <source>
        <dbReference type="HAMAP-Rule" id="MF_00165"/>
    </source>
</evidence>
<name>KTHY_LISW6</name>
<proteinExistence type="inferred from homology"/>
<gene>
    <name evidence="1" type="primary">tmk</name>
    <name type="ordered locus">lwe2642</name>
</gene>
<keyword id="KW-0067">ATP-binding</keyword>
<keyword id="KW-0418">Kinase</keyword>
<keyword id="KW-0545">Nucleotide biosynthesis</keyword>
<keyword id="KW-0547">Nucleotide-binding</keyword>
<keyword id="KW-0808">Transferase</keyword>
<sequence length="208" mass="23143">MKAIFITLEGPDGSGKTTVGTLLNQKMEEAGIDFIKTREPGGSPISEKVRNIVLGIGNEEMDPKTEVLLIAGARRQHVVETIRPALAAGKTVLCDRFMDSSLAYQGAGRDMDMEQVLQVNLYAIEDTIPDRTYYLDVPAEVGLARIAANKGREVNRLDKEDISYHEKVQAGYEKIIKMFPDRFMRVDATMQPEEITEVILADILQQLS</sequence>
<dbReference type="EC" id="2.7.4.9" evidence="1"/>
<dbReference type="EMBL" id="AM263198">
    <property type="protein sequence ID" value="CAK22060.1"/>
    <property type="molecule type" value="Genomic_DNA"/>
</dbReference>
<dbReference type="RefSeq" id="WP_011703336.1">
    <property type="nucleotide sequence ID" value="NC_008555.1"/>
</dbReference>
<dbReference type="SMR" id="A0AM28"/>
<dbReference type="STRING" id="386043.lwe2642"/>
<dbReference type="GeneID" id="61190567"/>
<dbReference type="KEGG" id="lwe:lwe2642"/>
<dbReference type="eggNOG" id="COG0125">
    <property type="taxonomic scope" value="Bacteria"/>
</dbReference>
<dbReference type="HOGENOM" id="CLU_049131_0_2_9"/>
<dbReference type="OrthoDB" id="9774907at2"/>
<dbReference type="Proteomes" id="UP000000779">
    <property type="component" value="Chromosome"/>
</dbReference>
<dbReference type="GO" id="GO:0005829">
    <property type="term" value="C:cytosol"/>
    <property type="evidence" value="ECO:0007669"/>
    <property type="project" value="TreeGrafter"/>
</dbReference>
<dbReference type="GO" id="GO:0005524">
    <property type="term" value="F:ATP binding"/>
    <property type="evidence" value="ECO:0007669"/>
    <property type="project" value="UniProtKB-UniRule"/>
</dbReference>
<dbReference type="GO" id="GO:0004798">
    <property type="term" value="F:dTMP kinase activity"/>
    <property type="evidence" value="ECO:0007669"/>
    <property type="project" value="UniProtKB-UniRule"/>
</dbReference>
<dbReference type="GO" id="GO:0006233">
    <property type="term" value="P:dTDP biosynthetic process"/>
    <property type="evidence" value="ECO:0007669"/>
    <property type="project" value="InterPro"/>
</dbReference>
<dbReference type="GO" id="GO:0006235">
    <property type="term" value="P:dTTP biosynthetic process"/>
    <property type="evidence" value="ECO:0007669"/>
    <property type="project" value="UniProtKB-UniRule"/>
</dbReference>
<dbReference type="GO" id="GO:0006227">
    <property type="term" value="P:dUDP biosynthetic process"/>
    <property type="evidence" value="ECO:0007669"/>
    <property type="project" value="TreeGrafter"/>
</dbReference>
<dbReference type="CDD" id="cd01672">
    <property type="entry name" value="TMPK"/>
    <property type="match status" value="1"/>
</dbReference>
<dbReference type="FunFam" id="3.40.50.300:FF:000225">
    <property type="entry name" value="Thymidylate kinase"/>
    <property type="match status" value="1"/>
</dbReference>
<dbReference type="Gene3D" id="3.40.50.300">
    <property type="entry name" value="P-loop containing nucleotide triphosphate hydrolases"/>
    <property type="match status" value="1"/>
</dbReference>
<dbReference type="HAMAP" id="MF_00165">
    <property type="entry name" value="Thymidylate_kinase"/>
    <property type="match status" value="1"/>
</dbReference>
<dbReference type="InterPro" id="IPR027417">
    <property type="entry name" value="P-loop_NTPase"/>
</dbReference>
<dbReference type="InterPro" id="IPR039430">
    <property type="entry name" value="Thymidylate_kin-like_dom"/>
</dbReference>
<dbReference type="InterPro" id="IPR018095">
    <property type="entry name" value="Thymidylate_kin_CS"/>
</dbReference>
<dbReference type="InterPro" id="IPR018094">
    <property type="entry name" value="Thymidylate_kinase"/>
</dbReference>
<dbReference type="NCBIfam" id="TIGR00041">
    <property type="entry name" value="DTMP_kinase"/>
    <property type="match status" value="1"/>
</dbReference>
<dbReference type="PANTHER" id="PTHR10344">
    <property type="entry name" value="THYMIDYLATE KINASE"/>
    <property type="match status" value="1"/>
</dbReference>
<dbReference type="PANTHER" id="PTHR10344:SF4">
    <property type="entry name" value="UMP-CMP KINASE 2, MITOCHONDRIAL"/>
    <property type="match status" value="1"/>
</dbReference>
<dbReference type="Pfam" id="PF02223">
    <property type="entry name" value="Thymidylate_kin"/>
    <property type="match status" value="1"/>
</dbReference>
<dbReference type="SUPFAM" id="SSF52540">
    <property type="entry name" value="P-loop containing nucleoside triphosphate hydrolases"/>
    <property type="match status" value="1"/>
</dbReference>
<dbReference type="PROSITE" id="PS01331">
    <property type="entry name" value="THYMIDYLATE_KINASE"/>
    <property type="match status" value="1"/>
</dbReference>
<reference key="1">
    <citation type="journal article" date="2006" name="J. Bacteriol.">
        <title>Whole-genome sequence of Listeria welshimeri reveals common steps in genome reduction with Listeria innocua as compared to Listeria monocytogenes.</title>
        <authorList>
            <person name="Hain T."/>
            <person name="Steinweg C."/>
            <person name="Kuenne C.T."/>
            <person name="Billion A."/>
            <person name="Ghai R."/>
            <person name="Chatterjee S.S."/>
            <person name="Domann E."/>
            <person name="Kaerst U."/>
            <person name="Goesmann A."/>
            <person name="Bekel T."/>
            <person name="Bartels D."/>
            <person name="Kaiser O."/>
            <person name="Meyer F."/>
            <person name="Puehler A."/>
            <person name="Weisshaar B."/>
            <person name="Wehland J."/>
            <person name="Liang C."/>
            <person name="Dandekar T."/>
            <person name="Lampidis R."/>
            <person name="Kreft J."/>
            <person name="Goebel W."/>
            <person name="Chakraborty T."/>
        </authorList>
    </citation>
    <scope>NUCLEOTIDE SEQUENCE [LARGE SCALE GENOMIC DNA]</scope>
    <source>
        <strain>ATCC 35897 / DSM 20650 / CCUG 15529 / CIP 8149 / NCTC 11857 / SLCC 5334 / V8</strain>
    </source>
</reference>
<organism>
    <name type="scientific">Listeria welshimeri serovar 6b (strain ATCC 35897 / DSM 20650 / CCUG 15529 / CIP 8149 / NCTC 11857 / SLCC 5334 / V8)</name>
    <dbReference type="NCBI Taxonomy" id="386043"/>
    <lineage>
        <taxon>Bacteria</taxon>
        <taxon>Bacillati</taxon>
        <taxon>Bacillota</taxon>
        <taxon>Bacilli</taxon>
        <taxon>Bacillales</taxon>
        <taxon>Listeriaceae</taxon>
        <taxon>Listeria</taxon>
    </lineage>
</organism>
<comment type="function">
    <text evidence="1">Phosphorylation of dTMP to form dTDP in both de novo and salvage pathways of dTTP synthesis.</text>
</comment>
<comment type="catalytic activity">
    <reaction evidence="1">
        <text>dTMP + ATP = dTDP + ADP</text>
        <dbReference type="Rhea" id="RHEA:13517"/>
        <dbReference type="ChEBI" id="CHEBI:30616"/>
        <dbReference type="ChEBI" id="CHEBI:58369"/>
        <dbReference type="ChEBI" id="CHEBI:63528"/>
        <dbReference type="ChEBI" id="CHEBI:456216"/>
        <dbReference type="EC" id="2.7.4.9"/>
    </reaction>
</comment>
<comment type="similarity">
    <text evidence="1">Belongs to the thymidylate kinase family.</text>
</comment>
<accession>A0AM28</accession>
<protein>
    <recommendedName>
        <fullName evidence="1">Thymidylate kinase</fullName>
        <ecNumber evidence="1">2.7.4.9</ecNumber>
    </recommendedName>
    <alternativeName>
        <fullName evidence="1">dTMP kinase</fullName>
    </alternativeName>
</protein>